<comment type="function">
    <text evidence="1">The RuvA-RuvB-RuvC complex processes Holliday junction (HJ) DNA during genetic recombination and DNA repair. Endonuclease that resolves HJ intermediates. Cleaves cruciform DNA by making single-stranded nicks across the HJ at symmetrical positions within the homologous arms, yielding a 5'-phosphate and a 3'-hydroxyl group; requires a central core of homology in the junction. The consensus cleavage sequence is 5'-(A/T)TT(C/G)-3'. Cleavage occurs on the 3'-side of the TT dinucleotide at the point of strand exchange. HJ branch migration catalyzed by RuvA-RuvB allows RuvC to scan DNA until it finds its consensus sequence, where it cleaves and resolves the cruciform DNA.</text>
</comment>
<comment type="catalytic activity">
    <reaction evidence="1">
        <text>Endonucleolytic cleavage at a junction such as a reciprocal single-stranded crossover between two homologous DNA duplexes (Holliday junction).</text>
        <dbReference type="EC" id="3.1.21.10"/>
    </reaction>
</comment>
<comment type="cofactor">
    <cofactor evidence="1">
        <name>Mg(2+)</name>
        <dbReference type="ChEBI" id="CHEBI:18420"/>
    </cofactor>
    <text evidence="1">Binds 2 Mg(2+) ion per subunit.</text>
</comment>
<comment type="subunit">
    <text evidence="1">Homodimer which binds Holliday junction (HJ) DNA. The HJ becomes 2-fold symmetrical on binding to RuvC with unstacked arms; it has a different conformation from HJ DNA in complex with RuvA. In the full resolvosome a probable DNA-RuvA(4)-RuvB(12)-RuvC(2) complex forms which resolves the HJ.</text>
</comment>
<comment type="subcellular location">
    <subcellularLocation>
        <location evidence="1">Cytoplasm</location>
    </subcellularLocation>
</comment>
<comment type="similarity">
    <text evidence="1">Belongs to the RuvC family.</text>
</comment>
<evidence type="ECO:0000255" key="1">
    <source>
        <dbReference type="HAMAP-Rule" id="MF_00034"/>
    </source>
</evidence>
<evidence type="ECO:0000256" key="2">
    <source>
        <dbReference type="SAM" id="MobiDB-lite"/>
    </source>
</evidence>
<dbReference type="EC" id="3.1.21.10" evidence="1"/>
<dbReference type="EMBL" id="CP000474">
    <property type="protein sequence ID" value="ABM07637.1"/>
    <property type="molecule type" value="Genomic_DNA"/>
</dbReference>
<dbReference type="RefSeq" id="WP_011774982.1">
    <property type="nucleotide sequence ID" value="NC_008711.1"/>
</dbReference>
<dbReference type="SMR" id="A1R726"/>
<dbReference type="STRING" id="290340.AAur_2299"/>
<dbReference type="KEGG" id="aau:AAur_2299"/>
<dbReference type="eggNOG" id="COG0817">
    <property type="taxonomic scope" value="Bacteria"/>
</dbReference>
<dbReference type="HOGENOM" id="CLU_091257_0_2_11"/>
<dbReference type="OrthoDB" id="9805499at2"/>
<dbReference type="Proteomes" id="UP000000637">
    <property type="component" value="Chromosome"/>
</dbReference>
<dbReference type="GO" id="GO:0005737">
    <property type="term" value="C:cytoplasm"/>
    <property type="evidence" value="ECO:0007669"/>
    <property type="project" value="UniProtKB-SubCell"/>
</dbReference>
<dbReference type="GO" id="GO:0048476">
    <property type="term" value="C:Holliday junction resolvase complex"/>
    <property type="evidence" value="ECO:0007669"/>
    <property type="project" value="UniProtKB-UniRule"/>
</dbReference>
<dbReference type="GO" id="GO:0008821">
    <property type="term" value="F:crossover junction DNA endonuclease activity"/>
    <property type="evidence" value="ECO:0007669"/>
    <property type="project" value="UniProtKB-UniRule"/>
</dbReference>
<dbReference type="GO" id="GO:0003677">
    <property type="term" value="F:DNA binding"/>
    <property type="evidence" value="ECO:0007669"/>
    <property type="project" value="UniProtKB-KW"/>
</dbReference>
<dbReference type="GO" id="GO:0000287">
    <property type="term" value="F:magnesium ion binding"/>
    <property type="evidence" value="ECO:0007669"/>
    <property type="project" value="UniProtKB-UniRule"/>
</dbReference>
<dbReference type="GO" id="GO:0006310">
    <property type="term" value="P:DNA recombination"/>
    <property type="evidence" value="ECO:0007669"/>
    <property type="project" value="UniProtKB-UniRule"/>
</dbReference>
<dbReference type="GO" id="GO:0006281">
    <property type="term" value="P:DNA repair"/>
    <property type="evidence" value="ECO:0007669"/>
    <property type="project" value="UniProtKB-UniRule"/>
</dbReference>
<dbReference type="CDD" id="cd16962">
    <property type="entry name" value="RuvC"/>
    <property type="match status" value="1"/>
</dbReference>
<dbReference type="FunFam" id="3.30.420.10:FF:000002">
    <property type="entry name" value="Crossover junction endodeoxyribonuclease RuvC"/>
    <property type="match status" value="1"/>
</dbReference>
<dbReference type="Gene3D" id="3.30.420.10">
    <property type="entry name" value="Ribonuclease H-like superfamily/Ribonuclease H"/>
    <property type="match status" value="1"/>
</dbReference>
<dbReference type="HAMAP" id="MF_00034">
    <property type="entry name" value="RuvC"/>
    <property type="match status" value="1"/>
</dbReference>
<dbReference type="InterPro" id="IPR012337">
    <property type="entry name" value="RNaseH-like_sf"/>
</dbReference>
<dbReference type="InterPro" id="IPR036397">
    <property type="entry name" value="RNaseH_sf"/>
</dbReference>
<dbReference type="InterPro" id="IPR020563">
    <property type="entry name" value="X-over_junc_endoDNase_Mg_BS"/>
</dbReference>
<dbReference type="InterPro" id="IPR002176">
    <property type="entry name" value="X-over_junc_endoDNase_RuvC"/>
</dbReference>
<dbReference type="NCBIfam" id="TIGR00228">
    <property type="entry name" value="ruvC"/>
    <property type="match status" value="1"/>
</dbReference>
<dbReference type="PANTHER" id="PTHR30194">
    <property type="entry name" value="CROSSOVER JUNCTION ENDODEOXYRIBONUCLEASE RUVC"/>
    <property type="match status" value="1"/>
</dbReference>
<dbReference type="PANTHER" id="PTHR30194:SF3">
    <property type="entry name" value="CROSSOVER JUNCTION ENDODEOXYRIBONUCLEASE RUVC"/>
    <property type="match status" value="1"/>
</dbReference>
<dbReference type="Pfam" id="PF02075">
    <property type="entry name" value="RuvC"/>
    <property type="match status" value="1"/>
</dbReference>
<dbReference type="PRINTS" id="PR00696">
    <property type="entry name" value="RSOLVASERUVC"/>
</dbReference>
<dbReference type="SUPFAM" id="SSF53098">
    <property type="entry name" value="Ribonuclease H-like"/>
    <property type="match status" value="1"/>
</dbReference>
<dbReference type="PROSITE" id="PS01321">
    <property type="entry name" value="RUVC"/>
    <property type="match status" value="1"/>
</dbReference>
<keyword id="KW-0963">Cytoplasm</keyword>
<keyword id="KW-0227">DNA damage</keyword>
<keyword id="KW-0233">DNA recombination</keyword>
<keyword id="KW-0234">DNA repair</keyword>
<keyword id="KW-0238">DNA-binding</keyword>
<keyword id="KW-0255">Endonuclease</keyword>
<keyword id="KW-0378">Hydrolase</keyword>
<keyword id="KW-0460">Magnesium</keyword>
<keyword id="KW-0479">Metal-binding</keyword>
<keyword id="KW-0540">Nuclease</keyword>
<proteinExistence type="inferred from homology"/>
<protein>
    <recommendedName>
        <fullName evidence="1">Crossover junction endodeoxyribonuclease RuvC</fullName>
        <ecNumber evidence="1">3.1.21.10</ecNumber>
    </recommendedName>
    <alternativeName>
        <fullName evidence="1">Holliday junction nuclease RuvC</fullName>
    </alternativeName>
    <alternativeName>
        <fullName evidence="1">Holliday junction resolvase RuvC</fullName>
    </alternativeName>
</protein>
<accession>A1R726</accession>
<gene>
    <name evidence="1" type="primary">ruvC</name>
    <name type="ordered locus">AAur_2299</name>
</gene>
<feature type="chain" id="PRO_1000002716" description="Crossover junction endodeoxyribonuclease RuvC">
    <location>
        <begin position="1"/>
        <end position="189"/>
    </location>
</feature>
<feature type="region of interest" description="Disordered" evidence="2">
    <location>
        <begin position="162"/>
        <end position="189"/>
    </location>
</feature>
<feature type="compositionally biased region" description="Low complexity" evidence="2">
    <location>
        <begin position="162"/>
        <end position="178"/>
    </location>
</feature>
<feature type="compositionally biased region" description="Basic and acidic residues" evidence="2">
    <location>
        <begin position="179"/>
        <end position="189"/>
    </location>
</feature>
<feature type="active site" evidence="1">
    <location>
        <position position="9"/>
    </location>
</feature>
<feature type="active site" evidence="1">
    <location>
        <position position="70"/>
    </location>
</feature>
<feature type="active site" evidence="1">
    <location>
        <position position="143"/>
    </location>
</feature>
<feature type="binding site" evidence="1">
    <location>
        <position position="9"/>
    </location>
    <ligand>
        <name>Mg(2+)</name>
        <dbReference type="ChEBI" id="CHEBI:18420"/>
        <label>1</label>
    </ligand>
</feature>
<feature type="binding site" evidence="1">
    <location>
        <position position="70"/>
    </location>
    <ligand>
        <name>Mg(2+)</name>
        <dbReference type="ChEBI" id="CHEBI:18420"/>
        <label>2</label>
    </ligand>
</feature>
<feature type="binding site" evidence="1">
    <location>
        <position position="143"/>
    </location>
    <ligand>
        <name>Mg(2+)</name>
        <dbReference type="ChEBI" id="CHEBI:18420"/>
        <label>1</label>
    </ligand>
</feature>
<organism>
    <name type="scientific">Paenarthrobacter aurescens (strain TC1)</name>
    <dbReference type="NCBI Taxonomy" id="290340"/>
    <lineage>
        <taxon>Bacteria</taxon>
        <taxon>Bacillati</taxon>
        <taxon>Actinomycetota</taxon>
        <taxon>Actinomycetes</taxon>
        <taxon>Micrococcales</taxon>
        <taxon>Micrococcaceae</taxon>
        <taxon>Paenarthrobacter</taxon>
    </lineage>
</organism>
<sequence>MTLRVLGVDPGLTRCGIGVVDIEKNRRATMVAVGVVGTSAELTLDKRLLVIAQAIDEWLDRHEPDVVAVERVFSQMNVSTVMGVAQASGVVIAAAARRGIPVALHTPSEVKAAVTGSGTANKDAVTKLVTKILRLDAPPKPADAADALALALTHAWRAGSGMGAASGNSSLTPAQKAWADAEAKARRKR</sequence>
<name>RUVC_PAEAT</name>
<reference key="1">
    <citation type="journal article" date="2006" name="PLoS Genet.">
        <title>Secrets of soil survival revealed by the genome sequence of Arthrobacter aurescens TC1.</title>
        <authorList>
            <person name="Mongodin E.F."/>
            <person name="Shapir N."/>
            <person name="Daugherty S.C."/>
            <person name="DeBoy R.T."/>
            <person name="Emerson J.B."/>
            <person name="Shvartzbeyn A."/>
            <person name="Radune D."/>
            <person name="Vamathevan J."/>
            <person name="Riggs F."/>
            <person name="Grinberg V."/>
            <person name="Khouri H.M."/>
            <person name="Wackett L.P."/>
            <person name="Nelson K.E."/>
            <person name="Sadowsky M.J."/>
        </authorList>
    </citation>
    <scope>NUCLEOTIDE SEQUENCE [LARGE SCALE GENOMIC DNA]</scope>
    <source>
        <strain>TC1</strain>
    </source>
</reference>